<dbReference type="EMBL" id="AB038243">
    <property type="protein sequence ID" value="BAA90788.1"/>
    <property type="molecule type" value="mRNA"/>
</dbReference>
<dbReference type="EMBL" id="AK003485">
    <property type="protein sequence ID" value="BAB22813.1"/>
    <property type="molecule type" value="mRNA"/>
</dbReference>
<dbReference type="EMBL" id="AK005437">
    <property type="protein sequence ID" value="BAB24031.1"/>
    <property type="molecule type" value="mRNA"/>
</dbReference>
<dbReference type="EMBL" id="AK171651">
    <property type="protein sequence ID" value="BAE42588.1"/>
    <property type="molecule type" value="mRNA"/>
</dbReference>
<dbReference type="EMBL" id="BC013618">
    <property type="protein sequence ID" value="AAH13618.1"/>
    <property type="molecule type" value="mRNA"/>
</dbReference>
<dbReference type="EMBL" id="BC054440">
    <property type="protein sequence ID" value="AAH54440.1"/>
    <property type="molecule type" value="mRNA"/>
</dbReference>
<dbReference type="CCDS" id="CCDS19648.1"/>
<dbReference type="RefSeq" id="NP_062798.1">
    <property type="nucleotide sequence ID" value="NM_019824.4"/>
</dbReference>
<dbReference type="PDB" id="7AQK">
    <property type="method" value="EM"/>
    <property type="resolution" value="9.00 A"/>
    <property type="chains" value="e=1-178"/>
</dbReference>
<dbReference type="PDBsum" id="7AQK"/>
<dbReference type="SMR" id="Q9JM76"/>
<dbReference type="BioGRID" id="207939">
    <property type="interactions" value="20"/>
</dbReference>
<dbReference type="FunCoup" id="Q9JM76">
    <property type="interactions" value="1737"/>
</dbReference>
<dbReference type="IntAct" id="Q9JM76">
    <property type="interactions" value="6"/>
</dbReference>
<dbReference type="MINT" id="Q9JM76"/>
<dbReference type="STRING" id="10090.ENSMUSP00000099584"/>
<dbReference type="GlyGen" id="Q9JM76">
    <property type="glycosylation" value="1 site, 1 O-linked glycan (1 site)"/>
</dbReference>
<dbReference type="iPTMnet" id="Q9JM76"/>
<dbReference type="PhosphoSitePlus" id="Q9JM76"/>
<dbReference type="SwissPalm" id="Q9JM76"/>
<dbReference type="jPOST" id="Q9JM76"/>
<dbReference type="PaxDb" id="10090-ENSMUSP00000099584"/>
<dbReference type="PeptideAtlas" id="Q9JM76"/>
<dbReference type="ProteomicsDB" id="281833"/>
<dbReference type="Pumba" id="Q9JM76"/>
<dbReference type="TopDownProteomics" id="Q9JM76"/>
<dbReference type="Antibodypedia" id="1504">
    <property type="antibodies" value="243 antibodies from 34 providers"/>
</dbReference>
<dbReference type="DNASU" id="56378"/>
<dbReference type="Ensembl" id="ENSMUST00000102525.11">
    <property type="protein sequence ID" value="ENSMUSP00000099584.5"/>
    <property type="gene ID" value="ENSMUSG00000029465.15"/>
</dbReference>
<dbReference type="GeneID" id="56378"/>
<dbReference type="KEGG" id="mmu:56378"/>
<dbReference type="UCSC" id="uc008zlf.1">
    <property type="organism name" value="mouse"/>
</dbReference>
<dbReference type="AGR" id="MGI:1928375"/>
<dbReference type="CTD" id="10094"/>
<dbReference type="MGI" id="MGI:1928375">
    <property type="gene designation" value="Arpc3"/>
</dbReference>
<dbReference type="VEuPathDB" id="HostDB:ENSMUSG00000029465"/>
<dbReference type="eggNOG" id="KOG3155">
    <property type="taxonomic scope" value="Eukaryota"/>
</dbReference>
<dbReference type="GeneTree" id="ENSGT00390000018018"/>
<dbReference type="HOGENOM" id="CLU_094365_1_0_1"/>
<dbReference type="InParanoid" id="Q9JM76"/>
<dbReference type="OMA" id="TPSKWWL"/>
<dbReference type="OrthoDB" id="200404at2759"/>
<dbReference type="PhylomeDB" id="Q9JM76"/>
<dbReference type="TreeFam" id="TF314598"/>
<dbReference type="Reactome" id="R-MMU-2029482">
    <property type="pathway name" value="Regulation of actin dynamics for phagocytic cup formation"/>
</dbReference>
<dbReference type="Reactome" id="R-MMU-3928662">
    <property type="pathway name" value="EPHB-mediated forward signaling"/>
</dbReference>
<dbReference type="Reactome" id="R-MMU-5663213">
    <property type="pathway name" value="RHO GTPases Activate WASPs and WAVEs"/>
</dbReference>
<dbReference type="Reactome" id="R-MMU-8856828">
    <property type="pathway name" value="Clathrin-mediated endocytosis"/>
</dbReference>
<dbReference type="BioGRID-ORCS" id="56378">
    <property type="hits" value="14 hits in 76 CRISPR screens"/>
</dbReference>
<dbReference type="CD-CODE" id="CE726F99">
    <property type="entry name" value="Postsynaptic density"/>
</dbReference>
<dbReference type="ChiTaRS" id="Arpc3">
    <property type="organism name" value="mouse"/>
</dbReference>
<dbReference type="PRO" id="PR:Q9JM76"/>
<dbReference type="Proteomes" id="UP000000589">
    <property type="component" value="Chromosome 5"/>
</dbReference>
<dbReference type="RNAct" id="Q9JM76">
    <property type="molecule type" value="protein"/>
</dbReference>
<dbReference type="Bgee" id="ENSMUSG00000029465">
    <property type="expression patterns" value="Expressed in granulocyte and 266 other cell types or tissues"/>
</dbReference>
<dbReference type="ExpressionAtlas" id="Q9JM76">
    <property type="expression patterns" value="baseline and differential"/>
</dbReference>
<dbReference type="GO" id="GO:0005885">
    <property type="term" value="C:Arp2/3 protein complex"/>
    <property type="evidence" value="ECO:0000250"/>
    <property type="project" value="UniProtKB"/>
</dbReference>
<dbReference type="GO" id="GO:0005737">
    <property type="term" value="C:cytoplasm"/>
    <property type="evidence" value="ECO:0007669"/>
    <property type="project" value="UniProtKB-KW"/>
</dbReference>
<dbReference type="GO" id="GO:0030027">
    <property type="term" value="C:lamellipodium"/>
    <property type="evidence" value="ECO:0000314"/>
    <property type="project" value="MGI"/>
</dbReference>
<dbReference type="GO" id="GO:0005634">
    <property type="term" value="C:nucleus"/>
    <property type="evidence" value="ECO:0000250"/>
    <property type="project" value="UniProtKB"/>
</dbReference>
<dbReference type="GO" id="GO:0035861">
    <property type="term" value="C:site of double-strand break"/>
    <property type="evidence" value="ECO:0000250"/>
    <property type="project" value="UniProtKB"/>
</dbReference>
<dbReference type="GO" id="GO:0051015">
    <property type="term" value="F:actin filament binding"/>
    <property type="evidence" value="ECO:0007669"/>
    <property type="project" value="Ensembl"/>
</dbReference>
<dbReference type="GO" id="GO:0005200">
    <property type="term" value="F:structural constituent of cytoskeleton"/>
    <property type="evidence" value="ECO:0007669"/>
    <property type="project" value="Ensembl"/>
</dbReference>
<dbReference type="GO" id="GO:0034314">
    <property type="term" value="P:Arp2/3 complex-mediated actin nucleation"/>
    <property type="evidence" value="ECO:0007669"/>
    <property type="project" value="Ensembl"/>
</dbReference>
<dbReference type="GO" id="GO:0030833">
    <property type="term" value="P:regulation of actin filament polymerization"/>
    <property type="evidence" value="ECO:0007669"/>
    <property type="project" value="InterPro"/>
</dbReference>
<dbReference type="GO" id="GO:1900242">
    <property type="term" value="P:regulation of synaptic vesicle endocytosis"/>
    <property type="evidence" value="ECO:0000314"/>
    <property type="project" value="SynGO"/>
</dbReference>
<dbReference type="FunFam" id="1.10.1760.10:FF:000001">
    <property type="entry name" value="Actin-related protein 2/3 complex subunit 3"/>
    <property type="match status" value="1"/>
</dbReference>
<dbReference type="Gene3D" id="1.10.1760.10">
    <property type="entry name" value="Actin-related protein 2/3 complex subunit 3"/>
    <property type="match status" value="1"/>
</dbReference>
<dbReference type="InterPro" id="IPR007204">
    <property type="entry name" value="ARPC3"/>
</dbReference>
<dbReference type="InterPro" id="IPR036753">
    <property type="entry name" value="ARPC3_sf"/>
</dbReference>
<dbReference type="PANTHER" id="PTHR12391">
    <property type="entry name" value="ARP2/3 COMPLEX 21 KD SUBUNIT"/>
    <property type="match status" value="1"/>
</dbReference>
<dbReference type="Pfam" id="PF04062">
    <property type="entry name" value="P21-Arc"/>
    <property type="match status" value="1"/>
</dbReference>
<dbReference type="PIRSF" id="PIRSF016315">
    <property type="entry name" value="ARP2/3_P21-Arc"/>
    <property type="match status" value="1"/>
</dbReference>
<dbReference type="SUPFAM" id="SSF69060">
    <property type="entry name" value="Arp2/3 complex 21 kDa subunit ARPC3"/>
    <property type="match status" value="1"/>
</dbReference>
<proteinExistence type="evidence at protein level"/>
<gene>
    <name type="primary">Arpc3</name>
</gene>
<reference key="1">
    <citation type="submission" date="2000-02" db="EMBL/GenBank/DDBJ databases">
        <authorList>
            <person name="Sugiura S."/>
        </authorList>
    </citation>
    <scope>NUCLEOTIDE SEQUENCE [MRNA]</scope>
    <source>
        <strain>BALB/cJ</strain>
        <tissue>Peritoneal macrophage</tissue>
    </source>
</reference>
<reference key="2">
    <citation type="journal article" date="2005" name="Science">
        <title>The transcriptional landscape of the mammalian genome.</title>
        <authorList>
            <person name="Carninci P."/>
            <person name="Kasukawa T."/>
            <person name="Katayama S."/>
            <person name="Gough J."/>
            <person name="Frith M.C."/>
            <person name="Maeda N."/>
            <person name="Oyama R."/>
            <person name="Ravasi T."/>
            <person name="Lenhard B."/>
            <person name="Wells C."/>
            <person name="Kodzius R."/>
            <person name="Shimokawa K."/>
            <person name="Bajic V.B."/>
            <person name="Brenner S.E."/>
            <person name="Batalov S."/>
            <person name="Forrest A.R."/>
            <person name="Zavolan M."/>
            <person name="Davis M.J."/>
            <person name="Wilming L.G."/>
            <person name="Aidinis V."/>
            <person name="Allen J.E."/>
            <person name="Ambesi-Impiombato A."/>
            <person name="Apweiler R."/>
            <person name="Aturaliya R.N."/>
            <person name="Bailey T.L."/>
            <person name="Bansal M."/>
            <person name="Baxter L."/>
            <person name="Beisel K.W."/>
            <person name="Bersano T."/>
            <person name="Bono H."/>
            <person name="Chalk A.M."/>
            <person name="Chiu K.P."/>
            <person name="Choudhary V."/>
            <person name="Christoffels A."/>
            <person name="Clutterbuck D.R."/>
            <person name="Crowe M.L."/>
            <person name="Dalla E."/>
            <person name="Dalrymple B.P."/>
            <person name="de Bono B."/>
            <person name="Della Gatta G."/>
            <person name="di Bernardo D."/>
            <person name="Down T."/>
            <person name="Engstrom P."/>
            <person name="Fagiolini M."/>
            <person name="Faulkner G."/>
            <person name="Fletcher C.F."/>
            <person name="Fukushima T."/>
            <person name="Furuno M."/>
            <person name="Futaki S."/>
            <person name="Gariboldi M."/>
            <person name="Georgii-Hemming P."/>
            <person name="Gingeras T.R."/>
            <person name="Gojobori T."/>
            <person name="Green R.E."/>
            <person name="Gustincich S."/>
            <person name="Harbers M."/>
            <person name="Hayashi Y."/>
            <person name="Hensch T.K."/>
            <person name="Hirokawa N."/>
            <person name="Hill D."/>
            <person name="Huminiecki L."/>
            <person name="Iacono M."/>
            <person name="Ikeo K."/>
            <person name="Iwama A."/>
            <person name="Ishikawa T."/>
            <person name="Jakt M."/>
            <person name="Kanapin A."/>
            <person name="Katoh M."/>
            <person name="Kawasawa Y."/>
            <person name="Kelso J."/>
            <person name="Kitamura H."/>
            <person name="Kitano H."/>
            <person name="Kollias G."/>
            <person name="Krishnan S.P."/>
            <person name="Kruger A."/>
            <person name="Kummerfeld S.K."/>
            <person name="Kurochkin I.V."/>
            <person name="Lareau L.F."/>
            <person name="Lazarevic D."/>
            <person name="Lipovich L."/>
            <person name="Liu J."/>
            <person name="Liuni S."/>
            <person name="McWilliam S."/>
            <person name="Madan Babu M."/>
            <person name="Madera M."/>
            <person name="Marchionni L."/>
            <person name="Matsuda H."/>
            <person name="Matsuzawa S."/>
            <person name="Miki H."/>
            <person name="Mignone F."/>
            <person name="Miyake S."/>
            <person name="Morris K."/>
            <person name="Mottagui-Tabar S."/>
            <person name="Mulder N."/>
            <person name="Nakano N."/>
            <person name="Nakauchi H."/>
            <person name="Ng P."/>
            <person name="Nilsson R."/>
            <person name="Nishiguchi S."/>
            <person name="Nishikawa S."/>
            <person name="Nori F."/>
            <person name="Ohara O."/>
            <person name="Okazaki Y."/>
            <person name="Orlando V."/>
            <person name="Pang K.C."/>
            <person name="Pavan W.J."/>
            <person name="Pavesi G."/>
            <person name="Pesole G."/>
            <person name="Petrovsky N."/>
            <person name="Piazza S."/>
            <person name="Reed J."/>
            <person name="Reid J.F."/>
            <person name="Ring B.Z."/>
            <person name="Ringwald M."/>
            <person name="Rost B."/>
            <person name="Ruan Y."/>
            <person name="Salzberg S.L."/>
            <person name="Sandelin A."/>
            <person name="Schneider C."/>
            <person name="Schoenbach C."/>
            <person name="Sekiguchi K."/>
            <person name="Semple C.A."/>
            <person name="Seno S."/>
            <person name="Sessa L."/>
            <person name="Sheng Y."/>
            <person name="Shibata Y."/>
            <person name="Shimada H."/>
            <person name="Shimada K."/>
            <person name="Silva D."/>
            <person name="Sinclair B."/>
            <person name="Sperling S."/>
            <person name="Stupka E."/>
            <person name="Sugiura K."/>
            <person name="Sultana R."/>
            <person name="Takenaka Y."/>
            <person name="Taki K."/>
            <person name="Tammoja K."/>
            <person name="Tan S.L."/>
            <person name="Tang S."/>
            <person name="Taylor M.S."/>
            <person name="Tegner J."/>
            <person name="Teichmann S.A."/>
            <person name="Ueda H.R."/>
            <person name="van Nimwegen E."/>
            <person name="Verardo R."/>
            <person name="Wei C.L."/>
            <person name="Yagi K."/>
            <person name="Yamanishi H."/>
            <person name="Zabarovsky E."/>
            <person name="Zhu S."/>
            <person name="Zimmer A."/>
            <person name="Hide W."/>
            <person name="Bult C."/>
            <person name="Grimmond S.M."/>
            <person name="Teasdale R.D."/>
            <person name="Liu E.T."/>
            <person name="Brusic V."/>
            <person name="Quackenbush J."/>
            <person name="Wahlestedt C."/>
            <person name="Mattick J.S."/>
            <person name="Hume D.A."/>
            <person name="Kai C."/>
            <person name="Sasaki D."/>
            <person name="Tomaru Y."/>
            <person name="Fukuda S."/>
            <person name="Kanamori-Katayama M."/>
            <person name="Suzuki M."/>
            <person name="Aoki J."/>
            <person name="Arakawa T."/>
            <person name="Iida J."/>
            <person name="Imamura K."/>
            <person name="Itoh M."/>
            <person name="Kato T."/>
            <person name="Kawaji H."/>
            <person name="Kawagashira N."/>
            <person name="Kawashima T."/>
            <person name="Kojima M."/>
            <person name="Kondo S."/>
            <person name="Konno H."/>
            <person name="Nakano K."/>
            <person name="Ninomiya N."/>
            <person name="Nishio T."/>
            <person name="Okada M."/>
            <person name="Plessy C."/>
            <person name="Shibata K."/>
            <person name="Shiraki T."/>
            <person name="Suzuki S."/>
            <person name="Tagami M."/>
            <person name="Waki K."/>
            <person name="Watahiki A."/>
            <person name="Okamura-Oho Y."/>
            <person name="Suzuki H."/>
            <person name="Kawai J."/>
            <person name="Hayashizaki Y."/>
        </authorList>
    </citation>
    <scope>NUCLEOTIDE SEQUENCE [LARGE SCALE MRNA]</scope>
    <source>
        <strain>C57BL/6J</strain>
        <strain>NOD</strain>
        <tissue>Embryo</tissue>
        <tissue>Placenta</tissue>
        <tissue>Spleen</tissue>
    </source>
</reference>
<reference key="3">
    <citation type="journal article" date="2004" name="Genome Res.">
        <title>The status, quality, and expansion of the NIH full-length cDNA project: the Mammalian Gene Collection (MGC).</title>
        <authorList>
            <consortium name="The MGC Project Team"/>
        </authorList>
    </citation>
    <scope>NUCLEOTIDE SEQUENCE [LARGE SCALE MRNA]</scope>
    <source>
        <strain>Czech II</strain>
        <strain>FVB/N</strain>
        <tissue>Colon</tissue>
        <tissue>Mammary tumor</tissue>
    </source>
</reference>
<reference key="4">
    <citation type="submission" date="2008-03" db="UniProtKB">
        <authorList>
            <person name="Sumpton D.P."/>
            <person name="Sandilands E."/>
            <person name="Frame M.C."/>
            <person name="Bienvenut W.V."/>
        </authorList>
    </citation>
    <scope>PROTEIN SEQUENCE OF 2-25; 38-50; 94-119; 131-137 AND 148-158</scope>
    <scope>CLEAVAGE OF INITIATOR METHIONINE</scope>
    <scope>IDENTIFICATION BY MASS SPECTROMETRY</scope>
    <source>
        <tissue>Embryonic fibroblast</tissue>
    </source>
</reference>
<reference key="5">
    <citation type="journal article" date="2007" name="J. Immunol.">
        <title>Quantitative time-resolved phosphoproteomic analysis of mast cell signaling.</title>
        <authorList>
            <person name="Cao L."/>
            <person name="Yu K."/>
            <person name="Banh C."/>
            <person name="Nguyen V."/>
            <person name="Ritz A."/>
            <person name="Raphael B.J."/>
            <person name="Kawakami Y."/>
            <person name="Kawakami T."/>
            <person name="Salomon A.R."/>
        </authorList>
    </citation>
    <scope>PHOSPHORYLATION [LARGE SCALE ANALYSIS] AT TYR-47</scope>
    <scope>IDENTIFICATION BY MASS SPECTROMETRY [LARGE SCALE ANALYSIS]</scope>
    <source>
        <tissue>Mast cell</tissue>
    </source>
</reference>
<reference key="6">
    <citation type="journal article" date="2010" name="Cell">
        <title>A tissue-specific atlas of mouse protein phosphorylation and expression.</title>
        <authorList>
            <person name="Huttlin E.L."/>
            <person name="Jedrychowski M.P."/>
            <person name="Elias J.E."/>
            <person name="Goswami T."/>
            <person name="Rad R."/>
            <person name="Beausoleil S.A."/>
            <person name="Villen J."/>
            <person name="Haas W."/>
            <person name="Sowa M.E."/>
            <person name="Gygi S.P."/>
        </authorList>
    </citation>
    <scope>IDENTIFICATION BY MASS SPECTROMETRY [LARGE SCALE ANALYSIS]</scope>
    <source>
        <tissue>Brain</tissue>
        <tissue>Brown adipose tissue</tissue>
        <tissue>Heart</tissue>
        <tissue>Kidney</tissue>
        <tissue>Liver</tissue>
        <tissue>Lung</tissue>
        <tissue>Pancreas</tissue>
        <tissue>Spleen</tissue>
        <tissue>Testis</tissue>
    </source>
</reference>
<name>ARPC3_MOUSE</name>
<comment type="function">
    <text evidence="1">Component of the Arp2/3 complex, a multiprotein complex that mediates actin polymerization upon stimulation by nucleation-promoting factor (NPF). The Arp2/3 complex mediates the formation of branched actin networks in the cytoplasm, providing the force for cell motility. In addition to its role in the cytoplasmic cytoskeleton, the Arp2/3 complex also promotes actin polymerization in the nucleus, thereby regulating gene transcription and repair of damaged DNA. The Arp2/3 complex promotes homologous recombination (HR) repair in response to DNA damage by promoting nuclear actin polymerization, leading to drive motility of double-strand breaks (DSBs).</text>
</comment>
<comment type="subunit">
    <text evidence="1">Component of the Arp2/3 complex composed of ACTR2/ARP2, ACTR3/ARP3, ARPC1B/p41-ARC, ARPC2/p34-ARC, ARPC3/p21-ARC, ARPC4/p20-ARC and ARPC5/p16-ARC.</text>
</comment>
<comment type="subcellular location">
    <subcellularLocation>
        <location evidence="1">Cytoplasm</location>
        <location evidence="1">Cytoskeleton</location>
    </subcellularLocation>
    <subcellularLocation>
        <location evidence="1">Cell projection</location>
    </subcellularLocation>
    <subcellularLocation>
        <location evidence="1">Nucleus</location>
    </subcellularLocation>
</comment>
<comment type="similarity">
    <text evidence="3">Belongs to the ARPC3 family.</text>
</comment>
<feature type="initiator methionine" description="Removed" evidence="2">
    <location>
        <position position="1"/>
    </location>
</feature>
<feature type="chain" id="PRO_0000124043" description="Actin-related protein 2/3 complex subunit 3">
    <location>
        <begin position="2"/>
        <end position="178"/>
    </location>
</feature>
<feature type="modified residue" description="Phosphotyrosine" evidence="4">
    <location>
        <position position="47"/>
    </location>
</feature>
<feature type="modified residue" description="N6-acetyllysine" evidence="1">
    <location>
        <position position="56"/>
    </location>
</feature>
<feature type="modified residue" description="N6-acetyllysine" evidence="1">
    <location>
        <position position="61"/>
    </location>
</feature>
<feature type="cross-link" description="Glycyl lysine isopeptide (Lys-Gly) (interchain with G-Cter in SUMO2)" evidence="1">
    <location>
        <position position="14"/>
    </location>
</feature>
<protein>
    <recommendedName>
        <fullName>Actin-related protein 2/3 complex subunit 3</fullName>
    </recommendedName>
    <alternativeName>
        <fullName>Arp2/3 complex 21 kDa subunit</fullName>
        <shortName>p21-ARC</shortName>
    </alternativeName>
</protein>
<sequence>MPAYHSSLMDPDTKLIGNMALLPLRSQFKGPAPRETKDTDIVDEAIYYFKANVFFKNYEIKNEADRTLIYITLYISECLKKLQKCNSKSQGEKEMYTLGITNFPIPGEPGFPLNAIYAKPASKQEDEMMRAYLQQLRQETGLRLCEKVFDPQSDKPSKWWTCFVKRQFMNKSLSGPGQ</sequence>
<keyword id="KW-0002">3D-structure</keyword>
<keyword id="KW-0007">Acetylation</keyword>
<keyword id="KW-0009">Actin-binding</keyword>
<keyword id="KW-0966">Cell projection</keyword>
<keyword id="KW-0963">Cytoplasm</keyword>
<keyword id="KW-0206">Cytoskeleton</keyword>
<keyword id="KW-0903">Direct protein sequencing</keyword>
<keyword id="KW-1017">Isopeptide bond</keyword>
<keyword id="KW-0539">Nucleus</keyword>
<keyword id="KW-0597">Phosphoprotein</keyword>
<keyword id="KW-1185">Reference proteome</keyword>
<keyword id="KW-0832">Ubl conjugation</keyword>
<accession>Q9JM76</accession>
<accession>Q3TAT0</accession>
<evidence type="ECO:0000250" key="1">
    <source>
        <dbReference type="UniProtKB" id="O15145"/>
    </source>
</evidence>
<evidence type="ECO:0000269" key="2">
    <source ref="4"/>
</evidence>
<evidence type="ECO:0000305" key="3"/>
<evidence type="ECO:0007744" key="4">
    <source>
    </source>
</evidence>
<organism>
    <name type="scientific">Mus musculus</name>
    <name type="common">Mouse</name>
    <dbReference type="NCBI Taxonomy" id="10090"/>
    <lineage>
        <taxon>Eukaryota</taxon>
        <taxon>Metazoa</taxon>
        <taxon>Chordata</taxon>
        <taxon>Craniata</taxon>
        <taxon>Vertebrata</taxon>
        <taxon>Euteleostomi</taxon>
        <taxon>Mammalia</taxon>
        <taxon>Eutheria</taxon>
        <taxon>Euarchontoglires</taxon>
        <taxon>Glires</taxon>
        <taxon>Rodentia</taxon>
        <taxon>Myomorpha</taxon>
        <taxon>Muroidea</taxon>
        <taxon>Muridae</taxon>
        <taxon>Murinae</taxon>
        <taxon>Mus</taxon>
        <taxon>Mus</taxon>
    </lineage>
</organism>